<feature type="chain" id="PRO_0000154707" description="Large ribosomal subunit protein uL10">
    <location>
        <begin position="1"/>
        <end position="166"/>
    </location>
</feature>
<gene>
    <name evidence="1" type="primary">rplJ</name>
    <name type="ordered locus">SA0497</name>
</gene>
<protein>
    <recommendedName>
        <fullName evidence="1">Large ribosomal subunit protein uL10</fullName>
    </recommendedName>
    <alternativeName>
        <fullName evidence="2">50S ribosomal protein L10</fullName>
    </alternativeName>
</protein>
<evidence type="ECO:0000255" key="1">
    <source>
        <dbReference type="HAMAP-Rule" id="MF_00362"/>
    </source>
</evidence>
<evidence type="ECO:0000305" key="2"/>
<name>RL10_STAAN</name>
<comment type="function">
    <text evidence="1">Forms part of the ribosomal stalk, playing a central role in the interaction of the ribosome with GTP-bound translation factors.</text>
</comment>
<comment type="subunit">
    <text evidence="1">Part of the ribosomal stalk of the 50S ribosomal subunit. The N-terminus interacts with L11 and the large rRNA to form the base of the stalk. The C-terminus forms an elongated spine to which L12 dimers bind in a sequential fashion forming a multimeric L10(L12)X complex.</text>
</comment>
<comment type="similarity">
    <text evidence="1">Belongs to the universal ribosomal protein uL10 family.</text>
</comment>
<keyword id="KW-0687">Ribonucleoprotein</keyword>
<keyword id="KW-0689">Ribosomal protein</keyword>
<keyword id="KW-0694">RNA-binding</keyword>
<keyword id="KW-0699">rRNA-binding</keyword>
<accession>P99155</accession>
<accession>Q99W67</accession>
<organism>
    <name type="scientific">Staphylococcus aureus (strain N315)</name>
    <dbReference type="NCBI Taxonomy" id="158879"/>
    <lineage>
        <taxon>Bacteria</taxon>
        <taxon>Bacillati</taxon>
        <taxon>Bacillota</taxon>
        <taxon>Bacilli</taxon>
        <taxon>Bacillales</taxon>
        <taxon>Staphylococcaceae</taxon>
        <taxon>Staphylococcus</taxon>
    </lineage>
</organism>
<proteinExistence type="evidence at protein level"/>
<dbReference type="EMBL" id="BA000018">
    <property type="protein sequence ID" value="BAB41728.1"/>
    <property type="molecule type" value="Genomic_DNA"/>
</dbReference>
<dbReference type="PIR" id="E89821">
    <property type="entry name" value="E89821"/>
</dbReference>
<dbReference type="RefSeq" id="WP_001273085.1">
    <property type="nucleotide sequence ID" value="NC_002745.2"/>
</dbReference>
<dbReference type="SMR" id="P99155"/>
<dbReference type="EnsemblBacteria" id="BAB41728">
    <property type="protein sequence ID" value="BAB41728"/>
    <property type="gene ID" value="BAB41728"/>
</dbReference>
<dbReference type="KEGG" id="sau:SA0497"/>
<dbReference type="HOGENOM" id="CLU_092227_2_0_9"/>
<dbReference type="GO" id="GO:0015934">
    <property type="term" value="C:large ribosomal subunit"/>
    <property type="evidence" value="ECO:0007669"/>
    <property type="project" value="InterPro"/>
</dbReference>
<dbReference type="GO" id="GO:0070180">
    <property type="term" value="F:large ribosomal subunit rRNA binding"/>
    <property type="evidence" value="ECO:0007669"/>
    <property type="project" value="UniProtKB-UniRule"/>
</dbReference>
<dbReference type="GO" id="GO:0003735">
    <property type="term" value="F:structural constituent of ribosome"/>
    <property type="evidence" value="ECO:0007669"/>
    <property type="project" value="InterPro"/>
</dbReference>
<dbReference type="GO" id="GO:0006412">
    <property type="term" value="P:translation"/>
    <property type="evidence" value="ECO:0007669"/>
    <property type="project" value="UniProtKB-UniRule"/>
</dbReference>
<dbReference type="CDD" id="cd05797">
    <property type="entry name" value="Ribosomal_L10"/>
    <property type="match status" value="1"/>
</dbReference>
<dbReference type="FunFam" id="3.30.70.1730:FF:000001">
    <property type="entry name" value="50S ribosomal protein L10"/>
    <property type="match status" value="1"/>
</dbReference>
<dbReference type="Gene3D" id="3.30.70.1730">
    <property type="match status" value="1"/>
</dbReference>
<dbReference type="Gene3D" id="6.10.250.290">
    <property type="match status" value="1"/>
</dbReference>
<dbReference type="HAMAP" id="MF_00362">
    <property type="entry name" value="Ribosomal_uL10"/>
    <property type="match status" value="1"/>
</dbReference>
<dbReference type="InterPro" id="IPR001790">
    <property type="entry name" value="Ribosomal_uL10"/>
</dbReference>
<dbReference type="InterPro" id="IPR043141">
    <property type="entry name" value="Ribosomal_uL10-like_sf"/>
</dbReference>
<dbReference type="InterPro" id="IPR022973">
    <property type="entry name" value="Ribosomal_uL10_bac"/>
</dbReference>
<dbReference type="InterPro" id="IPR047865">
    <property type="entry name" value="Ribosomal_uL10_bac_type"/>
</dbReference>
<dbReference type="InterPro" id="IPR002363">
    <property type="entry name" value="Ribosomal_uL10_CS_bac"/>
</dbReference>
<dbReference type="NCBIfam" id="NF000955">
    <property type="entry name" value="PRK00099.1-1"/>
    <property type="match status" value="1"/>
</dbReference>
<dbReference type="PANTHER" id="PTHR11560">
    <property type="entry name" value="39S RIBOSOMAL PROTEIN L10, MITOCHONDRIAL"/>
    <property type="match status" value="1"/>
</dbReference>
<dbReference type="Pfam" id="PF00466">
    <property type="entry name" value="Ribosomal_L10"/>
    <property type="match status" value="1"/>
</dbReference>
<dbReference type="SUPFAM" id="SSF160369">
    <property type="entry name" value="Ribosomal protein L10-like"/>
    <property type="match status" value="1"/>
</dbReference>
<dbReference type="PROSITE" id="PS01109">
    <property type="entry name" value="RIBOSOMAL_L10"/>
    <property type="match status" value="1"/>
</dbReference>
<sequence>MSAIIEAKKQLVDEIAEVLSNSVSTVIVDYRGLTVAEVTDLRSQLREAGVEYKVYKNTMVRRAAEKAGIEGLDEFLTGPTAIATSSEDAVAAAKVISGFAKDHEALEIKSGVMEGNVITAEEVKTVGSLPSHDGLVSMLLSVLQAPVRNFAYAVKAIGEQKEENAE</sequence>
<reference key="1">
    <citation type="journal article" date="2001" name="Lancet">
        <title>Whole genome sequencing of meticillin-resistant Staphylococcus aureus.</title>
        <authorList>
            <person name="Kuroda M."/>
            <person name="Ohta T."/>
            <person name="Uchiyama I."/>
            <person name="Baba T."/>
            <person name="Yuzawa H."/>
            <person name="Kobayashi I."/>
            <person name="Cui L."/>
            <person name="Oguchi A."/>
            <person name="Aoki K."/>
            <person name="Nagai Y."/>
            <person name="Lian J.-Q."/>
            <person name="Ito T."/>
            <person name="Kanamori M."/>
            <person name="Matsumaru H."/>
            <person name="Maruyama A."/>
            <person name="Murakami H."/>
            <person name="Hosoyama A."/>
            <person name="Mizutani-Ui Y."/>
            <person name="Takahashi N.K."/>
            <person name="Sawano T."/>
            <person name="Inoue R."/>
            <person name="Kaito C."/>
            <person name="Sekimizu K."/>
            <person name="Hirakawa H."/>
            <person name="Kuhara S."/>
            <person name="Goto S."/>
            <person name="Yabuzaki J."/>
            <person name="Kanehisa M."/>
            <person name="Yamashita A."/>
            <person name="Oshima K."/>
            <person name="Furuya K."/>
            <person name="Yoshino C."/>
            <person name="Shiba T."/>
            <person name="Hattori M."/>
            <person name="Ogasawara N."/>
            <person name="Hayashi H."/>
            <person name="Hiramatsu K."/>
        </authorList>
    </citation>
    <scope>NUCLEOTIDE SEQUENCE [LARGE SCALE GENOMIC DNA]</scope>
    <source>
        <strain>N315</strain>
    </source>
</reference>
<reference key="2">
    <citation type="journal article" date="2005" name="J. Microbiol. Methods">
        <title>Correlation of proteomic and transcriptomic profiles of Staphylococcus aureus during the post-exponential phase of growth.</title>
        <authorList>
            <person name="Scherl A."/>
            <person name="Francois P."/>
            <person name="Bento M."/>
            <person name="Deshusses J.M."/>
            <person name="Charbonnier Y."/>
            <person name="Converset V."/>
            <person name="Huyghe A."/>
            <person name="Walter N."/>
            <person name="Hoogland C."/>
            <person name="Appel R.D."/>
            <person name="Sanchez J.-C."/>
            <person name="Zimmermann-Ivol C.G."/>
            <person name="Corthals G.L."/>
            <person name="Hochstrasser D.F."/>
            <person name="Schrenzel J."/>
        </authorList>
    </citation>
    <scope>IDENTIFICATION BY MASS SPECTROMETRY</scope>
    <source>
        <strain>N315</strain>
    </source>
</reference>
<reference key="3">
    <citation type="submission" date="2007-10" db="UniProtKB">
        <title>Shotgun proteomic analysis of total and membrane protein extracts of S. aureus strain N315.</title>
        <authorList>
            <person name="Vaezzadeh A.R."/>
            <person name="Deshusses J."/>
            <person name="Lescuyer P."/>
            <person name="Hochstrasser D.F."/>
        </authorList>
    </citation>
    <scope>IDENTIFICATION BY MASS SPECTROMETRY [LARGE SCALE ANALYSIS]</scope>
    <source>
        <strain>N315</strain>
    </source>
</reference>